<name>ANMK_PSEU2</name>
<proteinExistence type="inferred from homology"/>
<keyword id="KW-0067">ATP-binding</keyword>
<keyword id="KW-0119">Carbohydrate metabolism</keyword>
<keyword id="KW-0418">Kinase</keyword>
<keyword id="KW-0547">Nucleotide-binding</keyword>
<keyword id="KW-0808">Transferase</keyword>
<gene>
    <name evidence="1" type="primary">anmK</name>
    <name type="ordered locus">Psyr_4567</name>
</gene>
<organism>
    <name type="scientific">Pseudomonas syringae pv. syringae (strain B728a)</name>
    <dbReference type="NCBI Taxonomy" id="205918"/>
    <lineage>
        <taxon>Bacteria</taxon>
        <taxon>Pseudomonadati</taxon>
        <taxon>Pseudomonadota</taxon>
        <taxon>Gammaproteobacteria</taxon>
        <taxon>Pseudomonadales</taxon>
        <taxon>Pseudomonadaceae</taxon>
        <taxon>Pseudomonas</taxon>
        <taxon>Pseudomonas syringae</taxon>
    </lineage>
</organism>
<protein>
    <recommendedName>
        <fullName evidence="1">Anhydro-N-acetylmuramic acid kinase</fullName>
        <ecNumber evidence="1">2.7.1.170</ecNumber>
    </recommendedName>
    <alternativeName>
        <fullName evidence="1">AnhMurNAc kinase</fullName>
    </alternativeName>
</protein>
<sequence length="364" mass="39476">MDFFYIGVMSGSSLDGIDIALLKQDDRSRLLATHYIPMPEDLHAELLGLCSSGADELARAAIAEQKWCRLVAQGVQTLLQDQNMVPAQIRAIGSHGQTIRHEPSRGYSIQIGNPALLAELTEITVVSDFRRRDIAAGGQGAPLVPAFHEALFDDNKDHRAVLNIGGFSNLSLIESDRPVEGFDCGPGNVLLDAWISSQLHESYDKDGAWSASGKVDSALLQKLLSDQFFLTKGPKSTGREVFNLGWVKHHLFQSKTLAPEDVQATLLELTALTITDSLKSAQPITRELLVCGGGAHNKALMKRLAELLPDTEVSSTEKFGVNPDWVEAMAFAWLAHCCLEGVPANRPTVTGAKGRRVLGAIYPA</sequence>
<reference key="1">
    <citation type="journal article" date="2005" name="Proc. Natl. Acad. Sci. U.S.A.">
        <title>Comparison of the complete genome sequences of Pseudomonas syringae pv. syringae B728a and pv. tomato DC3000.</title>
        <authorList>
            <person name="Feil H."/>
            <person name="Feil W.S."/>
            <person name="Chain P."/>
            <person name="Larimer F."/>
            <person name="Dibartolo G."/>
            <person name="Copeland A."/>
            <person name="Lykidis A."/>
            <person name="Trong S."/>
            <person name="Nolan M."/>
            <person name="Goltsman E."/>
            <person name="Thiel J."/>
            <person name="Malfatti S."/>
            <person name="Loper J.E."/>
            <person name="Lapidus A."/>
            <person name="Detter J.C."/>
            <person name="Land M."/>
            <person name="Richardson P.M."/>
            <person name="Kyrpides N.C."/>
            <person name="Ivanova N."/>
            <person name="Lindow S.E."/>
        </authorList>
    </citation>
    <scope>NUCLEOTIDE SEQUENCE [LARGE SCALE GENOMIC DNA]</scope>
    <source>
        <strain>B728a</strain>
    </source>
</reference>
<feature type="chain" id="PRO_0000250033" description="Anhydro-N-acetylmuramic acid kinase">
    <location>
        <begin position="1"/>
        <end position="364"/>
    </location>
</feature>
<feature type="binding site" evidence="1">
    <location>
        <begin position="11"/>
        <end position="18"/>
    </location>
    <ligand>
        <name>ATP</name>
        <dbReference type="ChEBI" id="CHEBI:30616"/>
    </ligand>
</feature>
<dbReference type="EC" id="2.7.1.170" evidence="1"/>
<dbReference type="EMBL" id="CP000075">
    <property type="protein sequence ID" value="AAY39597.1"/>
    <property type="molecule type" value="Genomic_DNA"/>
</dbReference>
<dbReference type="RefSeq" id="WP_011269098.1">
    <property type="nucleotide sequence ID" value="NC_007005.1"/>
</dbReference>
<dbReference type="RefSeq" id="YP_237635.1">
    <property type="nucleotide sequence ID" value="NC_007005.1"/>
</dbReference>
<dbReference type="SMR" id="Q4ZMM5"/>
<dbReference type="STRING" id="205918.Psyr_4567"/>
<dbReference type="KEGG" id="psb:Psyr_4567"/>
<dbReference type="PATRIC" id="fig|205918.7.peg.4706"/>
<dbReference type="eggNOG" id="COG2377">
    <property type="taxonomic scope" value="Bacteria"/>
</dbReference>
<dbReference type="HOGENOM" id="CLU_038782_0_0_6"/>
<dbReference type="OrthoDB" id="9763949at2"/>
<dbReference type="UniPathway" id="UPA00343"/>
<dbReference type="UniPathway" id="UPA00544"/>
<dbReference type="Proteomes" id="UP000000426">
    <property type="component" value="Chromosome"/>
</dbReference>
<dbReference type="GO" id="GO:0005524">
    <property type="term" value="F:ATP binding"/>
    <property type="evidence" value="ECO:0007669"/>
    <property type="project" value="UniProtKB-UniRule"/>
</dbReference>
<dbReference type="GO" id="GO:0016301">
    <property type="term" value="F:kinase activity"/>
    <property type="evidence" value="ECO:0007669"/>
    <property type="project" value="UniProtKB-KW"/>
</dbReference>
<dbReference type="GO" id="GO:0016773">
    <property type="term" value="F:phosphotransferase activity, alcohol group as acceptor"/>
    <property type="evidence" value="ECO:0007669"/>
    <property type="project" value="UniProtKB-UniRule"/>
</dbReference>
<dbReference type="GO" id="GO:0097175">
    <property type="term" value="P:1,6-anhydro-N-acetyl-beta-muramic acid catabolic process"/>
    <property type="evidence" value="ECO:0007669"/>
    <property type="project" value="UniProtKB-UniRule"/>
</dbReference>
<dbReference type="GO" id="GO:0006040">
    <property type="term" value="P:amino sugar metabolic process"/>
    <property type="evidence" value="ECO:0007669"/>
    <property type="project" value="InterPro"/>
</dbReference>
<dbReference type="GO" id="GO:0009254">
    <property type="term" value="P:peptidoglycan turnover"/>
    <property type="evidence" value="ECO:0007669"/>
    <property type="project" value="UniProtKB-UniRule"/>
</dbReference>
<dbReference type="CDD" id="cd24050">
    <property type="entry name" value="ASKHA_NBD_ANMK"/>
    <property type="match status" value="1"/>
</dbReference>
<dbReference type="Gene3D" id="3.30.420.40">
    <property type="match status" value="2"/>
</dbReference>
<dbReference type="HAMAP" id="MF_01270">
    <property type="entry name" value="AnhMurNAc_kinase"/>
    <property type="match status" value="1"/>
</dbReference>
<dbReference type="InterPro" id="IPR005338">
    <property type="entry name" value="Anhydro_N_Ac-Mur_kinase"/>
</dbReference>
<dbReference type="InterPro" id="IPR043129">
    <property type="entry name" value="ATPase_NBD"/>
</dbReference>
<dbReference type="NCBIfam" id="NF007139">
    <property type="entry name" value="PRK09585.1-3"/>
    <property type="match status" value="1"/>
</dbReference>
<dbReference type="PANTHER" id="PTHR30605">
    <property type="entry name" value="ANHYDRO-N-ACETYLMURAMIC ACID KINASE"/>
    <property type="match status" value="1"/>
</dbReference>
<dbReference type="PANTHER" id="PTHR30605:SF0">
    <property type="entry name" value="ANHYDRO-N-ACETYLMURAMIC ACID KINASE"/>
    <property type="match status" value="1"/>
</dbReference>
<dbReference type="Pfam" id="PF03702">
    <property type="entry name" value="AnmK"/>
    <property type="match status" value="1"/>
</dbReference>
<dbReference type="SUPFAM" id="SSF53067">
    <property type="entry name" value="Actin-like ATPase domain"/>
    <property type="match status" value="1"/>
</dbReference>
<evidence type="ECO:0000255" key="1">
    <source>
        <dbReference type="HAMAP-Rule" id="MF_01270"/>
    </source>
</evidence>
<comment type="function">
    <text evidence="1">Catalyzes the specific phosphorylation of 1,6-anhydro-N-acetylmuramic acid (anhMurNAc) with the simultaneous cleavage of the 1,6-anhydro ring, generating MurNAc-6-P. Is required for the utilization of anhMurNAc either imported from the medium or derived from its own cell wall murein, and thus plays a role in cell wall recycling.</text>
</comment>
<comment type="catalytic activity">
    <reaction evidence="1">
        <text>1,6-anhydro-N-acetyl-beta-muramate + ATP + H2O = N-acetyl-D-muramate 6-phosphate + ADP + H(+)</text>
        <dbReference type="Rhea" id="RHEA:24952"/>
        <dbReference type="ChEBI" id="CHEBI:15377"/>
        <dbReference type="ChEBI" id="CHEBI:15378"/>
        <dbReference type="ChEBI" id="CHEBI:30616"/>
        <dbReference type="ChEBI" id="CHEBI:58690"/>
        <dbReference type="ChEBI" id="CHEBI:58722"/>
        <dbReference type="ChEBI" id="CHEBI:456216"/>
        <dbReference type="EC" id="2.7.1.170"/>
    </reaction>
</comment>
<comment type="pathway">
    <text evidence="1">Amino-sugar metabolism; 1,6-anhydro-N-acetylmuramate degradation.</text>
</comment>
<comment type="pathway">
    <text evidence="1">Cell wall biogenesis; peptidoglycan recycling.</text>
</comment>
<comment type="similarity">
    <text evidence="1">Belongs to the anhydro-N-acetylmuramic acid kinase family.</text>
</comment>
<accession>Q4ZMM5</accession>